<dbReference type="EC" id="1.2.1.71" evidence="1"/>
<dbReference type="EMBL" id="CP000857">
    <property type="protein sequence ID" value="ACN46536.1"/>
    <property type="molecule type" value="Genomic_DNA"/>
</dbReference>
<dbReference type="RefSeq" id="WP_000177278.1">
    <property type="nucleotide sequence ID" value="NC_012125.1"/>
</dbReference>
<dbReference type="SMR" id="C0Q6X8"/>
<dbReference type="KEGG" id="sei:SPC_2426"/>
<dbReference type="HOGENOM" id="CLU_005391_1_0_6"/>
<dbReference type="UniPathway" id="UPA00185">
    <property type="reaction ID" value="UER00282"/>
</dbReference>
<dbReference type="Proteomes" id="UP000001599">
    <property type="component" value="Chromosome"/>
</dbReference>
<dbReference type="GO" id="GO:0043824">
    <property type="term" value="F:succinylglutamate-semialdehyde dehydrogenase activity"/>
    <property type="evidence" value="ECO:0007669"/>
    <property type="project" value="UniProtKB-EC"/>
</dbReference>
<dbReference type="GO" id="GO:0019544">
    <property type="term" value="P:arginine catabolic process to glutamate"/>
    <property type="evidence" value="ECO:0007669"/>
    <property type="project" value="UniProtKB-UniRule"/>
</dbReference>
<dbReference type="GO" id="GO:0019545">
    <property type="term" value="P:arginine catabolic process to succinate"/>
    <property type="evidence" value="ECO:0007669"/>
    <property type="project" value="UniProtKB-UniRule"/>
</dbReference>
<dbReference type="CDD" id="cd07095">
    <property type="entry name" value="ALDH_SGSD_AstD"/>
    <property type="match status" value="1"/>
</dbReference>
<dbReference type="FunFam" id="3.40.309.10:FF:000013">
    <property type="entry name" value="N-succinylglutamate 5-semialdehyde dehydrogenase"/>
    <property type="match status" value="1"/>
</dbReference>
<dbReference type="FunFam" id="3.40.605.10:FF:000010">
    <property type="entry name" value="N-succinylglutamate 5-semialdehyde dehydrogenase"/>
    <property type="match status" value="1"/>
</dbReference>
<dbReference type="Gene3D" id="3.40.605.10">
    <property type="entry name" value="Aldehyde Dehydrogenase, Chain A, domain 1"/>
    <property type="match status" value="1"/>
</dbReference>
<dbReference type="Gene3D" id="3.40.309.10">
    <property type="entry name" value="Aldehyde Dehydrogenase, Chain A, domain 2"/>
    <property type="match status" value="1"/>
</dbReference>
<dbReference type="HAMAP" id="MF_01174">
    <property type="entry name" value="Aldedh_AstD"/>
    <property type="match status" value="1"/>
</dbReference>
<dbReference type="InterPro" id="IPR016161">
    <property type="entry name" value="Ald_DH/histidinol_DH"/>
</dbReference>
<dbReference type="InterPro" id="IPR016163">
    <property type="entry name" value="Ald_DH_C"/>
</dbReference>
<dbReference type="InterPro" id="IPR016160">
    <property type="entry name" value="Ald_DH_CS_CYS"/>
</dbReference>
<dbReference type="InterPro" id="IPR029510">
    <property type="entry name" value="Ald_DH_CS_GLU"/>
</dbReference>
<dbReference type="InterPro" id="IPR016162">
    <property type="entry name" value="Ald_DH_N"/>
</dbReference>
<dbReference type="InterPro" id="IPR015590">
    <property type="entry name" value="Aldehyde_DH_dom"/>
</dbReference>
<dbReference type="InterPro" id="IPR017649">
    <property type="entry name" value="SuccinylGlu_semiald_DH_AstD"/>
</dbReference>
<dbReference type="NCBIfam" id="TIGR03240">
    <property type="entry name" value="arg_catab_astD"/>
    <property type="match status" value="1"/>
</dbReference>
<dbReference type="NCBIfam" id="NF006992">
    <property type="entry name" value="PRK09457.1"/>
    <property type="match status" value="1"/>
</dbReference>
<dbReference type="PANTHER" id="PTHR11699">
    <property type="entry name" value="ALDEHYDE DEHYDROGENASE-RELATED"/>
    <property type="match status" value="1"/>
</dbReference>
<dbReference type="Pfam" id="PF00171">
    <property type="entry name" value="Aldedh"/>
    <property type="match status" value="1"/>
</dbReference>
<dbReference type="SUPFAM" id="SSF53720">
    <property type="entry name" value="ALDH-like"/>
    <property type="match status" value="1"/>
</dbReference>
<dbReference type="PROSITE" id="PS00070">
    <property type="entry name" value="ALDEHYDE_DEHYDR_CYS"/>
    <property type="match status" value="1"/>
</dbReference>
<dbReference type="PROSITE" id="PS00687">
    <property type="entry name" value="ALDEHYDE_DEHYDR_GLU"/>
    <property type="match status" value="1"/>
</dbReference>
<organism>
    <name type="scientific">Salmonella paratyphi C (strain RKS4594)</name>
    <dbReference type="NCBI Taxonomy" id="476213"/>
    <lineage>
        <taxon>Bacteria</taxon>
        <taxon>Pseudomonadati</taxon>
        <taxon>Pseudomonadota</taxon>
        <taxon>Gammaproteobacteria</taxon>
        <taxon>Enterobacterales</taxon>
        <taxon>Enterobacteriaceae</taxon>
        <taxon>Salmonella</taxon>
    </lineage>
</organism>
<gene>
    <name evidence="1" type="primary">astD</name>
    <name type="ordered locus">SPC_2426</name>
</gene>
<accession>C0Q6X8</accession>
<protein>
    <recommendedName>
        <fullName evidence="1">N-succinylglutamate 5-semialdehyde dehydrogenase</fullName>
        <ecNumber evidence="1">1.2.1.71</ecNumber>
    </recommendedName>
    <alternativeName>
        <fullName evidence="1">Succinylglutamic semialdehyde dehydrogenase</fullName>
        <shortName evidence="1">SGSD</shortName>
    </alternativeName>
</protein>
<evidence type="ECO:0000255" key="1">
    <source>
        <dbReference type="HAMAP-Rule" id="MF_01174"/>
    </source>
</evidence>
<name>ASTD_SALPC</name>
<sequence length="492" mass="53226">MTLWINGDWITGQGERRRKTNPVSAEILWQGNDANAAQVAEACQAARAAFPRWARQPFTARQAIVEKFAVLLEAHKADLTEVIARETGKPRWEAATEVTAMINKIAISIKAYHARTGEQKSELVDGAATLRHRPHGVLAVFGPYNFPGHLPNGHIVPALLAGNTLIFKPSELTPWTGETVIKLWERAGLPAGVLNLVQGGRETGQALSSLDDLDGLLFTGSASTGYQLHRQLSGQPEKILALEMGGNNPLIIEDVTNMDAAVHLTLQSAFITAGQRCTCARRLLVKQGAQGDAFLARLVDVAGRLQPGRWDDDPQPFIGGLISAQAAQHVMEAWRQREALGGRTLLAPRKVKEGTSLLTPGIIELTGVTDVPDEEVFGPLLNVWRYAHFDEAIRLANNTRFGLSCGLVSTDRAQFEQLLLEARAGIVNWNKPLTGAASTAPFGGVGASGNHRPSAWYAADYCAWPMASLESPELTLPATLSPGLDFSRREAV</sequence>
<feature type="chain" id="PRO_1000164405" description="N-succinylglutamate 5-semialdehyde dehydrogenase">
    <location>
        <begin position="1"/>
        <end position="492"/>
    </location>
</feature>
<feature type="active site" evidence="1">
    <location>
        <position position="243"/>
    </location>
</feature>
<feature type="active site" evidence="1">
    <location>
        <position position="277"/>
    </location>
</feature>
<feature type="binding site" evidence="1">
    <location>
        <begin position="220"/>
        <end position="225"/>
    </location>
    <ligand>
        <name>NAD(+)</name>
        <dbReference type="ChEBI" id="CHEBI:57540"/>
    </ligand>
</feature>
<comment type="function">
    <text evidence="1">Catalyzes the NAD-dependent reduction of succinylglutamate semialdehyde into succinylglutamate.</text>
</comment>
<comment type="catalytic activity">
    <reaction evidence="1">
        <text>N-succinyl-L-glutamate 5-semialdehyde + NAD(+) + H2O = N-succinyl-L-glutamate + NADH + 2 H(+)</text>
        <dbReference type="Rhea" id="RHEA:10812"/>
        <dbReference type="ChEBI" id="CHEBI:15377"/>
        <dbReference type="ChEBI" id="CHEBI:15378"/>
        <dbReference type="ChEBI" id="CHEBI:57540"/>
        <dbReference type="ChEBI" id="CHEBI:57945"/>
        <dbReference type="ChEBI" id="CHEBI:58520"/>
        <dbReference type="ChEBI" id="CHEBI:58763"/>
        <dbReference type="EC" id="1.2.1.71"/>
    </reaction>
</comment>
<comment type="pathway">
    <text evidence="1">Amino-acid degradation; L-arginine degradation via AST pathway; L-glutamate and succinate from L-arginine: step 4/5.</text>
</comment>
<comment type="similarity">
    <text evidence="1">Belongs to the aldehyde dehydrogenase family. AstD subfamily.</text>
</comment>
<keyword id="KW-0056">Arginine metabolism</keyword>
<keyword id="KW-0520">NAD</keyword>
<keyword id="KW-0560">Oxidoreductase</keyword>
<proteinExistence type="inferred from homology"/>
<reference key="1">
    <citation type="journal article" date="2009" name="PLoS ONE">
        <title>Salmonella paratyphi C: genetic divergence from Salmonella choleraesuis and pathogenic convergence with Salmonella typhi.</title>
        <authorList>
            <person name="Liu W.-Q."/>
            <person name="Feng Y."/>
            <person name="Wang Y."/>
            <person name="Zou Q.-H."/>
            <person name="Chen F."/>
            <person name="Guo J.-T."/>
            <person name="Peng Y.-H."/>
            <person name="Jin Y."/>
            <person name="Li Y.-G."/>
            <person name="Hu S.-N."/>
            <person name="Johnston R.N."/>
            <person name="Liu G.-R."/>
            <person name="Liu S.-L."/>
        </authorList>
    </citation>
    <scope>NUCLEOTIDE SEQUENCE [LARGE SCALE GENOMIC DNA]</scope>
    <source>
        <strain>RKS4594</strain>
    </source>
</reference>